<gene>
    <name type="ordered locus">Ta1145</name>
</gene>
<sequence length="392" mass="43297">MNVFNTASDEDIKKGLASDVYFERTISAIGDKCNDLRVAMEATVSGPLDTWINFTGLDEVLKLLEGLDVDLYAIPEGTILFPRDANGLPVPFIRVEGRYCDFGMYETAILGFICQASGISTKASKVRLAAGDSPFFSFGIRRMHPAISPMIDRSAYIGGADGVSGILGAKLIDQDPVGTMPHALSIMLGDEEAWKLTLENTKNGQKSVLLIDTYMDEKFAAIKIAEMFDKVDYIRLDTPSSRRGNFEALIREVRWELALRGRSDIKIMVSGGLDENTVKKLREAGAEAFGVGTSISSAKPFDFAMDIVEVNGKPETKRGKMSGRKNVLRCTSCHRIEVVPANVQEKTCICGGSMQNLLVKYLSHGKRTSEYPRPKEIRSRSMKELEYFKDIS</sequence>
<proteinExistence type="evidence at protein level"/>
<dbReference type="EC" id="6.3.4.21" evidence="1"/>
<dbReference type="EMBL" id="AL445066">
    <property type="protein sequence ID" value="CAC12271.1"/>
    <property type="molecule type" value="Genomic_DNA"/>
</dbReference>
<dbReference type="RefSeq" id="WP_010901554.1">
    <property type="nucleotide sequence ID" value="NC_002578.1"/>
</dbReference>
<dbReference type="PDB" id="1YTD">
    <property type="method" value="X-ray"/>
    <property type="resolution" value="2.80 A"/>
    <property type="chains" value="A=1-392"/>
</dbReference>
<dbReference type="PDB" id="1YTE">
    <property type="method" value="X-ray"/>
    <property type="resolution" value="2.75 A"/>
    <property type="chains" value="A=1-392"/>
</dbReference>
<dbReference type="PDB" id="1YTK">
    <property type="method" value="X-ray"/>
    <property type="resolution" value="2.65 A"/>
    <property type="chains" value="A=1-392"/>
</dbReference>
<dbReference type="PDB" id="2I1O">
    <property type="method" value="X-ray"/>
    <property type="resolution" value="2.40 A"/>
    <property type="chains" value="A=1-392"/>
</dbReference>
<dbReference type="PDBsum" id="1YTD"/>
<dbReference type="PDBsum" id="1YTE"/>
<dbReference type="PDBsum" id="1YTK"/>
<dbReference type="PDBsum" id="2I1O"/>
<dbReference type="SMR" id="Q9HJ28"/>
<dbReference type="FunCoup" id="Q9HJ28">
    <property type="interactions" value="134"/>
</dbReference>
<dbReference type="STRING" id="273075.gene:9572367"/>
<dbReference type="PaxDb" id="273075-Ta1145"/>
<dbReference type="EnsemblBacteria" id="CAC12271">
    <property type="protein sequence ID" value="CAC12271"/>
    <property type="gene ID" value="CAC12271"/>
</dbReference>
<dbReference type="KEGG" id="tac:Ta1145"/>
<dbReference type="eggNOG" id="arCOG01481">
    <property type="taxonomic scope" value="Archaea"/>
</dbReference>
<dbReference type="HOGENOM" id="CLU_043773_0_0_2"/>
<dbReference type="InParanoid" id="Q9HJ28"/>
<dbReference type="OrthoDB" id="371831at2157"/>
<dbReference type="BRENDA" id="6.3.4.21">
    <property type="organism ID" value="6324"/>
</dbReference>
<dbReference type="UniPathway" id="UPA00253">
    <property type="reaction ID" value="UER00457"/>
</dbReference>
<dbReference type="EvolutionaryTrace" id="Q9HJ28"/>
<dbReference type="Proteomes" id="UP000001024">
    <property type="component" value="Chromosome"/>
</dbReference>
<dbReference type="GO" id="GO:0046872">
    <property type="term" value="F:metal ion binding"/>
    <property type="evidence" value="ECO:0007669"/>
    <property type="project" value="UniProtKB-KW"/>
</dbReference>
<dbReference type="GO" id="GO:0004516">
    <property type="term" value="F:nicotinate phosphoribosyltransferase activity"/>
    <property type="evidence" value="ECO:0007669"/>
    <property type="project" value="UniProtKB-EC"/>
</dbReference>
<dbReference type="GO" id="GO:0004514">
    <property type="term" value="F:nicotinate-nucleotide diphosphorylase (carboxylating) activity"/>
    <property type="evidence" value="ECO:0007669"/>
    <property type="project" value="InterPro"/>
</dbReference>
<dbReference type="GO" id="GO:0000166">
    <property type="term" value="F:nucleotide binding"/>
    <property type="evidence" value="ECO:0007669"/>
    <property type="project" value="UniProtKB-KW"/>
</dbReference>
<dbReference type="GO" id="GO:0009435">
    <property type="term" value="P:NAD biosynthetic process"/>
    <property type="evidence" value="ECO:0007669"/>
    <property type="project" value="UniProtKB-UniPathway"/>
</dbReference>
<dbReference type="CDD" id="cd01571">
    <property type="entry name" value="NAPRTase_B"/>
    <property type="match status" value="1"/>
</dbReference>
<dbReference type="Gene3D" id="3.20.20.70">
    <property type="entry name" value="Aldolase class I"/>
    <property type="match status" value="1"/>
</dbReference>
<dbReference type="Gene3D" id="3.90.1170.20">
    <property type="entry name" value="Quinolinate phosphoribosyl transferase, N-terminal domain"/>
    <property type="match status" value="1"/>
</dbReference>
<dbReference type="InterPro" id="IPR013785">
    <property type="entry name" value="Aldolase_TIM"/>
</dbReference>
<dbReference type="InterPro" id="IPR053190">
    <property type="entry name" value="NAPRTase-like"/>
</dbReference>
<dbReference type="InterPro" id="IPR035809">
    <property type="entry name" value="NAPRTase_arc-type"/>
</dbReference>
<dbReference type="InterPro" id="IPR007229">
    <property type="entry name" value="Nic_PRibTrfase-Fam"/>
</dbReference>
<dbReference type="InterPro" id="IPR036068">
    <property type="entry name" value="Nicotinate_pribotase-like_C"/>
</dbReference>
<dbReference type="InterPro" id="IPR037128">
    <property type="entry name" value="Quinolinate_PRibosylTase_N_sf"/>
</dbReference>
<dbReference type="InterPro" id="IPR002638">
    <property type="entry name" value="Quinolinate_PRibosylTrfase_C"/>
</dbReference>
<dbReference type="InterPro" id="IPR022412">
    <property type="entry name" value="Quinolinate_PRibosylTrfase_N"/>
</dbReference>
<dbReference type="NCBIfam" id="NF006415">
    <property type="entry name" value="PRK08662.1"/>
    <property type="match status" value="1"/>
</dbReference>
<dbReference type="PANTHER" id="PTHR43202:SF1">
    <property type="entry name" value="NICOTINATE PHOSPHORIBOSYLTRANSFERASE"/>
    <property type="match status" value="1"/>
</dbReference>
<dbReference type="PANTHER" id="PTHR43202">
    <property type="entry name" value="NICOTINATE-NUCLEOTIDE PYROPHOSPHORYLASE"/>
    <property type="match status" value="1"/>
</dbReference>
<dbReference type="Pfam" id="PF01729">
    <property type="entry name" value="QRPTase_C"/>
    <property type="match status" value="1"/>
</dbReference>
<dbReference type="Pfam" id="PF02749">
    <property type="entry name" value="QRPTase_N"/>
    <property type="match status" value="1"/>
</dbReference>
<dbReference type="PIRSF" id="PIRSF000484">
    <property type="entry name" value="NAPRT"/>
    <property type="match status" value="1"/>
</dbReference>
<dbReference type="SUPFAM" id="SSF51690">
    <property type="entry name" value="Nicotinate/Quinolinate PRTase C-terminal domain-like"/>
    <property type="match status" value="1"/>
</dbReference>
<dbReference type="SUPFAM" id="SSF54675">
    <property type="entry name" value="Nicotinate/Quinolinate PRTase N-terminal domain-like"/>
    <property type="match status" value="1"/>
</dbReference>
<feature type="chain" id="PRO_0000410976" description="Putative nicotinate phosphoribosyltransferase">
    <location>
        <begin position="1"/>
        <end position="392"/>
    </location>
</feature>
<feature type="binding site" evidence="5">
    <location>
        <position position="21"/>
    </location>
    <ligand>
        <name>nicotinate</name>
        <dbReference type="ChEBI" id="CHEBI:32544"/>
    </ligand>
</feature>
<feature type="binding site" evidence="5">
    <location>
        <position position="138"/>
    </location>
    <ligand>
        <name>nicotinate</name>
        <dbReference type="ChEBI" id="CHEBI:32544"/>
    </ligand>
</feature>
<feature type="binding site" evidence="5 6">
    <location>
        <position position="179"/>
    </location>
    <ligand>
        <name>nicotinate</name>
        <dbReference type="ChEBI" id="CHEBI:32544"/>
    </ligand>
</feature>
<feature type="binding site" evidence="5 6">
    <location>
        <position position="235"/>
    </location>
    <ligand>
        <name>nicotinate</name>
        <dbReference type="ChEBI" id="CHEBI:32544"/>
    </ligand>
</feature>
<feature type="binding site" evidence="5">
    <location>
        <position position="240"/>
    </location>
    <ligand>
        <name>5-phospho-alpha-D-ribose 1-diphosphate</name>
        <dbReference type="ChEBI" id="CHEBI:58017"/>
    </ligand>
</feature>
<feature type="binding site" evidence="5 6">
    <location>
        <position position="272"/>
    </location>
    <ligand>
        <name>5-phospho-alpha-D-ribose 1-diphosphate</name>
        <dbReference type="ChEBI" id="CHEBI:58017"/>
    </ligand>
</feature>
<feature type="binding site" evidence="5 6">
    <location>
        <position position="293"/>
    </location>
    <ligand>
        <name>5-phospho-alpha-D-ribose 1-diphosphate</name>
        <dbReference type="ChEBI" id="CHEBI:58017"/>
    </ligand>
</feature>
<feature type="binding site" evidence="3">
    <location>
        <position position="330"/>
    </location>
    <ligand>
        <name>Zn(2+)</name>
        <dbReference type="ChEBI" id="CHEBI:29105"/>
        <label>1</label>
    </ligand>
</feature>
<feature type="binding site" evidence="3">
    <location>
        <position position="330"/>
    </location>
    <ligand>
        <name>Zn(2+)</name>
        <dbReference type="ChEBI" id="CHEBI:29105"/>
        <label>2</label>
    </ligand>
</feature>
<feature type="binding site" evidence="3">
    <location>
        <position position="333"/>
    </location>
    <ligand>
        <name>Zn(2+)</name>
        <dbReference type="ChEBI" id="CHEBI:29105"/>
        <label>1</label>
    </ligand>
</feature>
<feature type="binding site" evidence="3">
    <location>
        <position position="348"/>
    </location>
    <ligand>
        <name>Zn(2+)</name>
        <dbReference type="ChEBI" id="CHEBI:29105"/>
        <label>2</label>
    </ligand>
</feature>
<feature type="binding site" evidence="3">
    <location>
        <position position="350"/>
    </location>
    <ligand>
        <name>Zn(2+)</name>
        <dbReference type="ChEBI" id="CHEBI:29105"/>
        <label>1</label>
    </ligand>
</feature>
<feature type="binding site" evidence="3">
    <location>
        <position position="350"/>
    </location>
    <ligand>
        <name>Zn(2+)</name>
        <dbReference type="ChEBI" id="CHEBI:29105"/>
        <label>2</label>
    </ligand>
</feature>
<feature type="modified residue" description="Phosphohistidine" evidence="1">
    <location>
        <position position="182"/>
    </location>
</feature>
<feature type="strand" evidence="8">
    <location>
        <begin position="3"/>
        <end position="5"/>
    </location>
</feature>
<feature type="helix" evidence="8">
    <location>
        <begin position="9"/>
        <end position="13"/>
    </location>
</feature>
<feature type="helix" evidence="8">
    <location>
        <begin position="21"/>
        <end position="29"/>
    </location>
</feature>
<feature type="helix" evidence="8">
    <location>
        <begin position="30"/>
        <end position="35"/>
    </location>
</feature>
<feature type="strand" evidence="8">
    <location>
        <begin position="37"/>
        <end position="44"/>
    </location>
</feature>
<feature type="helix" evidence="8">
    <location>
        <begin position="57"/>
        <end position="64"/>
    </location>
</feature>
<feature type="strand" evidence="8">
    <location>
        <begin position="70"/>
        <end position="73"/>
    </location>
</feature>
<feature type="strand" evidence="8">
    <location>
        <begin position="91"/>
        <end position="98"/>
    </location>
</feature>
<feature type="helix" evidence="8">
    <location>
        <begin position="99"/>
        <end position="102"/>
    </location>
</feature>
<feature type="helix" evidence="8">
    <location>
        <begin position="103"/>
        <end position="105"/>
    </location>
</feature>
<feature type="helix" evidence="8">
    <location>
        <begin position="106"/>
        <end position="130"/>
    </location>
</feature>
<feature type="strand" evidence="8">
    <location>
        <begin position="135"/>
        <end position="137"/>
    </location>
</feature>
<feature type="helix" evidence="8">
    <location>
        <begin position="140"/>
        <end position="142"/>
    </location>
</feature>
<feature type="helix" evidence="8">
    <location>
        <begin position="145"/>
        <end position="147"/>
    </location>
</feature>
<feature type="helix" evidence="8">
    <location>
        <begin position="148"/>
        <end position="157"/>
    </location>
</feature>
<feature type="strand" evidence="8">
    <location>
        <begin position="161"/>
        <end position="163"/>
    </location>
</feature>
<feature type="helix" evidence="8">
    <location>
        <begin position="166"/>
        <end position="172"/>
    </location>
</feature>
<feature type="helix" evidence="8">
    <location>
        <begin position="182"/>
        <end position="188"/>
    </location>
</feature>
<feature type="helix" evidence="8">
    <location>
        <begin position="190"/>
        <end position="199"/>
    </location>
</feature>
<feature type="strand" evidence="8">
    <location>
        <begin position="208"/>
        <end position="210"/>
    </location>
</feature>
<feature type="strand" evidence="8">
    <location>
        <begin position="213"/>
        <end position="215"/>
    </location>
</feature>
<feature type="helix" evidence="8">
    <location>
        <begin position="217"/>
        <end position="225"/>
    </location>
</feature>
<feature type="strand" evidence="8">
    <location>
        <begin position="233"/>
        <end position="236"/>
    </location>
</feature>
<feature type="helix" evidence="8">
    <location>
        <begin position="240"/>
        <end position="242"/>
    </location>
</feature>
<feature type="helix" evidence="8">
    <location>
        <begin position="246"/>
        <end position="259"/>
    </location>
</feature>
<feature type="strand" evidence="8">
    <location>
        <begin position="265"/>
        <end position="272"/>
    </location>
</feature>
<feature type="helix" evidence="8">
    <location>
        <begin position="275"/>
        <end position="283"/>
    </location>
</feature>
<feature type="strand" evidence="8">
    <location>
        <begin position="288"/>
        <end position="291"/>
    </location>
</feature>
<feature type="helix" evidence="8">
    <location>
        <begin position="293"/>
        <end position="296"/>
    </location>
</feature>
<feature type="strand" evidence="8">
    <location>
        <begin position="303"/>
        <end position="310"/>
    </location>
</feature>
<feature type="strand" evidence="8">
    <location>
        <begin position="325"/>
        <end position="330"/>
    </location>
</feature>
<feature type="turn" evidence="8">
    <location>
        <begin position="331"/>
        <end position="333"/>
    </location>
</feature>
<feature type="strand" evidence="8">
    <location>
        <begin position="336"/>
        <end position="340"/>
    </location>
</feature>
<feature type="strand" evidence="7">
    <location>
        <begin position="345"/>
        <end position="347"/>
    </location>
</feature>
<feature type="strand" evidence="8">
    <location>
        <begin position="349"/>
        <end position="352"/>
    </location>
</feature>
<feature type="strand" evidence="8">
    <location>
        <begin position="354"/>
        <end position="356"/>
    </location>
</feature>
<feature type="strand" evidence="8">
    <location>
        <begin position="359"/>
        <end position="363"/>
    </location>
</feature>
<feature type="strand" evidence="8">
    <location>
        <begin position="366"/>
        <end position="369"/>
    </location>
</feature>
<feature type="helix" evidence="8">
    <location>
        <begin position="374"/>
        <end position="384"/>
    </location>
</feature>
<feature type="helix" evidence="8">
    <location>
        <begin position="385"/>
        <end position="388"/>
    </location>
</feature>
<comment type="function">
    <text evidence="1">Catalyzes the synthesis of beta-nicotinate D-ribonucleotide from nicotinate and 5-phospho-D-ribose 1-phosphate at the expense of ATP.</text>
</comment>
<comment type="catalytic activity">
    <reaction evidence="1">
        <text>nicotinate + 5-phospho-alpha-D-ribose 1-diphosphate + ATP + H2O = nicotinate beta-D-ribonucleotide + ADP + phosphate + diphosphate</text>
        <dbReference type="Rhea" id="RHEA:36163"/>
        <dbReference type="ChEBI" id="CHEBI:15377"/>
        <dbReference type="ChEBI" id="CHEBI:30616"/>
        <dbReference type="ChEBI" id="CHEBI:32544"/>
        <dbReference type="ChEBI" id="CHEBI:33019"/>
        <dbReference type="ChEBI" id="CHEBI:43474"/>
        <dbReference type="ChEBI" id="CHEBI:57502"/>
        <dbReference type="ChEBI" id="CHEBI:58017"/>
        <dbReference type="ChEBI" id="CHEBI:456216"/>
        <dbReference type="EC" id="6.3.4.21"/>
    </reaction>
</comment>
<comment type="pathway">
    <text evidence="1">Cofactor biosynthesis; NAD(+) biosynthesis; nicotinate D-ribonucleotide from nicotinate: step 1/1.</text>
</comment>
<comment type="subunit">
    <text evidence="2">Homodimer. Forms a trimer of dimers in the crystal.</text>
</comment>
<comment type="domain">
    <text evidence="2">Consists of three domains, an N-terminal domain, a central functional domain, and a unique C-terminal domain containing a zinc knuckle-like motif containing 4 cysteines.</text>
</comment>
<comment type="PTM">
    <text evidence="1">Transiently phosphorylated on a His residue during the reaction cycle. Phosphorylation strongly increases the affinity for substrates and increases the rate of nicotinate D-ribonucleotide production. Dephosphorylation regenerates the low-affinity form of the enzyme, leading to product release.</text>
</comment>
<comment type="similarity">
    <text evidence="4">Belongs to the NAPRTase family. Highly divergent.</text>
</comment>
<comment type="caution">
    <text evidence="5">Although this protein is stated to be a nicotinate phosphoribosyltransferase, it has not been functionally characterized, and it might be a quinolinate phosphoribosyltransferase (QPRTase).</text>
</comment>
<accession>Q9HJ28</accession>
<name>PNCB_THEAC</name>
<reference key="1">
    <citation type="journal article" date="2000" name="Nature">
        <title>The genome sequence of the thermoacidophilic scavenger Thermoplasma acidophilum.</title>
        <authorList>
            <person name="Ruepp A."/>
            <person name="Graml W."/>
            <person name="Santos-Martinez M.-L."/>
            <person name="Koretke K.K."/>
            <person name="Volker C."/>
            <person name="Mewes H.-W."/>
            <person name="Frishman D."/>
            <person name="Stocker S."/>
            <person name="Lupas A.N."/>
            <person name="Baumeister W."/>
        </authorList>
    </citation>
    <scope>NUCLEOTIDE SEQUENCE [LARGE SCALE GENOMIC DNA]</scope>
    <source>
        <strain>ATCC 25905 / DSM 1728 / JCM 9062 / NBRC 15155 / AMRC-C165</strain>
    </source>
</reference>
<reference key="2">
    <citation type="journal article" date="2005" name="J. Biol. Chem.">
        <title>Crystal structure of a nicotinate phosphoribosyltransferase from Thermoplasma acidophilum.</title>
        <authorList>
            <person name="Shin D.H."/>
            <person name="Oganesyan N."/>
            <person name="Jancarik J."/>
            <person name="Yokota H."/>
            <person name="Kim R."/>
            <person name="Kim S.H."/>
        </authorList>
    </citation>
    <scope>X-RAY CRYSTALLOGRAPHY (2.65 ANGSTROMS) OF APOPROTEIN AND IN COMPLEXES WITH NICOTINATE MONONUCLEOTIDE AND PRPP</scope>
    <scope>DOMAIN</scope>
    <scope>SUBUNIT</scope>
    <source>
        <strain>ATCC 25905 / DSM 1728 / JCM 9062 / NBRC 15155 / AMRC-C165</strain>
    </source>
</reference>
<reference key="3">
    <citation type="submission" date="2009-02" db="PDB data bank">
        <title>Crystal structure of a zinc ion bound nicotinate phosphoribosyltransferase from Thermoplasma acidophilum.</title>
        <authorList>
            <consortium name="Berkeley structural genomics center (BSGC)"/>
        </authorList>
    </citation>
    <scope>X-RAY CRYSTALLOGRAPHY (2.40 ANGSTROMS) IN COMPLEX WITH ZINC</scope>
</reference>
<keyword id="KW-0002">3D-structure</keyword>
<keyword id="KW-0436">Ligase</keyword>
<keyword id="KW-0479">Metal-binding</keyword>
<keyword id="KW-0547">Nucleotide-binding</keyword>
<keyword id="KW-0597">Phosphoprotein</keyword>
<keyword id="KW-0662">Pyridine nucleotide biosynthesis</keyword>
<keyword id="KW-1185">Reference proteome</keyword>
<keyword id="KW-0808">Transferase</keyword>
<keyword id="KW-0862">Zinc</keyword>
<evidence type="ECO:0000250" key="1">
    <source>
        <dbReference type="UniProtKB" id="P22253"/>
    </source>
</evidence>
<evidence type="ECO:0000269" key="2">
    <source>
    </source>
</evidence>
<evidence type="ECO:0000269" key="3">
    <source ref="3"/>
</evidence>
<evidence type="ECO:0000305" key="4"/>
<evidence type="ECO:0000305" key="5">
    <source>
    </source>
</evidence>
<evidence type="ECO:0007744" key="6">
    <source>
        <dbReference type="PDB" id="1YTK"/>
    </source>
</evidence>
<evidence type="ECO:0007829" key="7">
    <source>
        <dbReference type="PDB" id="1YTK"/>
    </source>
</evidence>
<evidence type="ECO:0007829" key="8">
    <source>
        <dbReference type="PDB" id="2I1O"/>
    </source>
</evidence>
<protein>
    <recommendedName>
        <fullName>Putative nicotinate phosphoribosyltransferase</fullName>
        <shortName>NAPRTase</shortName>
        <ecNumber evidence="1">6.3.4.21</ecNumber>
    </recommendedName>
</protein>
<organism>
    <name type="scientific">Thermoplasma acidophilum (strain ATCC 25905 / DSM 1728 / JCM 9062 / NBRC 15155 / AMRC-C165)</name>
    <dbReference type="NCBI Taxonomy" id="273075"/>
    <lineage>
        <taxon>Archaea</taxon>
        <taxon>Methanobacteriati</taxon>
        <taxon>Thermoplasmatota</taxon>
        <taxon>Thermoplasmata</taxon>
        <taxon>Thermoplasmatales</taxon>
        <taxon>Thermoplasmataceae</taxon>
        <taxon>Thermoplasma</taxon>
    </lineage>
</organism>